<organism>
    <name type="scientific">Mus musculus</name>
    <name type="common">Mouse</name>
    <dbReference type="NCBI Taxonomy" id="10090"/>
    <lineage>
        <taxon>Eukaryota</taxon>
        <taxon>Metazoa</taxon>
        <taxon>Chordata</taxon>
        <taxon>Craniata</taxon>
        <taxon>Vertebrata</taxon>
        <taxon>Euteleostomi</taxon>
        <taxon>Mammalia</taxon>
        <taxon>Eutheria</taxon>
        <taxon>Euarchontoglires</taxon>
        <taxon>Glires</taxon>
        <taxon>Rodentia</taxon>
        <taxon>Myomorpha</taxon>
        <taxon>Muroidea</taxon>
        <taxon>Muridae</taxon>
        <taxon>Murinae</taxon>
        <taxon>Mus</taxon>
        <taxon>Mus</taxon>
    </lineage>
</organism>
<name>DAB2_MOUSE</name>
<protein>
    <recommendedName>
        <fullName>Disabled homolog 2</fullName>
    </recommendedName>
    <alternativeName>
        <fullName>Adaptor molecule disabled-2</fullName>
    </alternativeName>
    <alternativeName>
        <fullName>Differentially expressed in ovarian carcinoma 2</fullName>
        <shortName>DOC-2</shortName>
    </alternativeName>
    <alternativeName>
        <fullName>Mitogen-responsive phosphoprotein</fullName>
    </alternativeName>
</protein>
<keyword id="KW-0002">3D-structure</keyword>
<keyword id="KW-0007">Acetylation</keyword>
<keyword id="KW-0025">Alternative splicing</keyword>
<keyword id="KW-0053">Apoptosis</keyword>
<keyword id="KW-0168">Coated pit</keyword>
<keyword id="KW-0963">Cytoplasm</keyword>
<keyword id="KW-0968">Cytoplasmic vesicle</keyword>
<keyword id="KW-0217">Developmental protein</keyword>
<keyword id="KW-0221">Differentiation</keyword>
<keyword id="KW-0254">Endocytosis</keyword>
<keyword id="KW-0472">Membrane</keyword>
<keyword id="KW-0539">Nucleus</keyword>
<keyword id="KW-0597">Phosphoprotein</keyword>
<keyword id="KW-0653">Protein transport</keyword>
<keyword id="KW-1185">Reference proteome</keyword>
<keyword id="KW-0813">Transport</keyword>
<keyword id="KW-0879">Wnt signaling pathway</keyword>
<comment type="function">
    <text evidence="7 8 10 11 12 18 19 20 21 22 23 24">Adapter protein that functions as a clathrin-associated sorting protein (CLASP) required for clathrin-mediated endocytosis of selected cargo proteins. Can bind and assemble clathrin, and binds simultaneously to phosphatidylinositol 4,5-bisphosphate (PtdIns(4,5)P2) and cargos containing non-phosphorylated NPXY internalization motifs, such as the LDL receptor, to recruit them to clathrin-coated pits. Can function in clathrin-mediated endocytosis independently of the AP-2 complex. Involved in endocytosis of integrin beta-1; this function seems to redundant with the AP-2 complex and seems to require DAB2 binding to endocytosis accessory EH domain-containing proteins such as EPS15, EPS15L1 and ITSN1. Involved in endocytosis of cystic fibrosis transmembrane conductance regulator/CFTR. Isoform p96 is involved in endocytosis of megalin/LRP2 lipoprotein receptor during embryonal development. Required for recycling of the TGF-beta receptor. Isoform p67 is not involved in LDL receptor endocytosis. Involved in CFTR trafficking to the late endosome. Involved in several receptor-mediated signaling pathways. Involved in TGF-beta receptor signaling and facilitates phosphorylation of the signal transducer SMAD2. Mediates TFG-beta-stimulated JNK activation. May inhibit the canoniocal Wnt/beta-catenin signaling pathway by stabilizing the beta-catenin destruction complex through a competing association with axin preventing its dephosphorylation through protein phosphatase 1 (PP1). Sequesters LRP6 towards clathrin-mediated endocytosis, leading to inhibition of Wnt/beta-catenin signaling. May activate non-canonical Wnt signaling. In cell surface growth factor/Ras signaling pathways proposed to inhibit ERK activation by interrupting the binding of GRB2 to SOS1 and to inhibit SRC by preventing its activating phosphorylation at 'Tyr-419'. Proposed to be involved in modulation of androgen receptor (AR) signaling mediated by SRC activation; seems to compete with AR for interaction with SRC. Plays a role in the CSF-1 signal transduction pathway. Plays a role in cellular differentiation. Involved in cell positioning and formation of visceral endoderm (VE) during embryogenesis and proposed to be required in the VE to respond to Nodal signaling coming from the epiblast. Required for the epithelial to mesenchymal transition, a process necessary for proper embryonic development. May be involved in myeloid cell differentiation and can induce macrophage adhesion and spreading. Isoform p67 may be involved in transcriptional regulation. May act as a tumor suppressor.</text>
</comment>
<comment type="subunit">
    <text evidence="6 7 9 11 13 15 16 17 18 19 23 25 26 27 30">Interacts (via NPXY motif) with DAB2 (via PID domain). Can interact (via PID domain) with LDLR, APP, APLP1 and APLP2, and weakly with INPP5D (via NPXY motifs); the interaction is impaired by tyrosine phosphorylation of the respective NPXY motifs. Can weakly interact (via PID domain) with LRP1 (via NPXY motif); the interaction is enhanced by tyrosine phosphorylation of the NPXY motif. Interacts with LRP2 (via NPXY motif); the interaction is not affected by tyrosine phosphorylation of the NPXY motif. Interacts with clathrin; in vitro can assemble clathrin triskelia into polyhedral coats. Interacts with AP2A2, ITGB1, ITGB3, ITGB5, PIAS2, DAB2IP, NOSTRIN, FCHO1, DVL3 and EPS15L1. Interacts with SH3KBP1 (via SH3 domains). Interacts with GRB2; competes with SOS1 for binding to GRB2 and the interaction is enhanced by EGF and NT-3 stimulation. Isoform p96 interacts with EPS15 and ITSN1; isoform p67 does not interact with EPS15 and only weakly interacts with ITSN1. Interacts with MAP3K7; the interaction is induced by TGF-beta stimulation and may mediate TGF-beta stimulated JNK activation. Interacts with AXIN1 and PPP1CA; the interactions are mutually exclusive. Interacts with the globular tail of MYO6. Interacts (via DPF motifs) with FCHO2; the interaction is direct and required for DAB2-mediated LDLR endocytosis. Interacts with LRP6; the interaction involves LRP6 phosphorylation by CK2 and sequesters LRP6 towards clathrin-mediated endocytosis. Associates with the TGF-beta receptor complex (Probable). Interacts with SMAD2 and SMAD3; the interactions are enhanced upon TGF-beta stimulation. Interacts with GRB2; the interaction is enhanced by EGF and NT-3 stimulation. Interacts with SRC; the interaction is enhanced by EGF stimulation.</text>
</comment>
<comment type="interaction">
    <interactant intactId="EBI-1391846">
        <id>P98078</id>
    </interactant>
    <interactant intactId="EBI-2365912">
        <id>O35625</id>
        <label>Axin1</label>
    </interactant>
    <organismsDiffer>false</organismsDiffer>
    <experiments>4</experiments>
</comment>
<comment type="interaction">
    <interactant intactId="EBI-1391846">
        <id>P98078</id>
    </interactant>
    <interactant intactId="EBI-443923">
        <id>P42567</id>
        <label>Eps15</label>
    </interactant>
    <organismsDiffer>false</organismsDiffer>
    <experiments>2</experiments>
</comment>
<comment type="interaction">
    <interactant intactId="EBI-1391846">
        <id>P98078</id>
    </interactant>
    <interactant intactId="EBI-443931">
        <id>Q60902</id>
        <label>Eps15l1</label>
    </interactant>
    <organismsDiffer>false</organismsDiffer>
    <experiments>2</experiments>
</comment>
<comment type="interaction">
    <interactant intactId="EBI-1391846">
        <id>P98078</id>
    </interactant>
    <interactant intactId="EBI-7845747">
        <id>P35917</id>
        <label>Flt4</label>
    </interactant>
    <organismsDiffer>false</organismsDiffer>
    <experiments>3</experiments>
</comment>
<comment type="interaction">
    <interactant intactId="EBI-1391846">
        <id>P98078</id>
    </interactant>
    <interactant intactId="EBI-1688">
        <id>Q60631</id>
        <label>Grb2</label>
    </interactant>
    <organismsDiffer>false</organismsDiffer>
    <experiments>4</experiments>
</comment>
<comment type="interaction">
    <interactant intactId="EBI-1391846">
        <id>P98078</id>
    </interactant>
    <interactant intactId="EBI-7592476">
        <id>Q9CR95</id>
        <label>Necap1</label>
    </interactant>
    <organismsDiffer>false</organismsDiffer>
    <experiments>2</experiments>
</comment>
<comment type="interaction">
    <interactant intactId="EBI-1391846">
        <id>P98078</id>
    </interactant>
    <interactant intactId="EBI-1391878">
        <id>Q6WKZ7</id>
        <label>Nostrin</label>
    </interactant>
    <organismsDiffer>false</organismsDiffer>
    <experiments>2</experiments>
</comment>
<comment type="interaction">
    <interactant intactId="EBI-1391846">
        <id>P98078</id>
    </interactant>
    <interactant intactId="EBI-15946047">
        <id>Q99NH2-1</id>
        <label>Pard3</label>
    </interactant>
    <organismsDiffer>false</organismsDiffer>
    <experiments>2</experiments>
</comment>
<comment type="interaction">
    <interactant intactId="EBI-1391846">
        <id>P98078</id>
    </interactant>
    <interactant intactId="EBI-6305825">
        <id>Q8C5D8</id>
        <label>Pias2</label>
    </interactant>
    <organismsDiffer>false</organismsDiffer>
    <experiments>2</experiments>
</comment>
<comment type="interaction">
    <interactant intactId="EBI-1391846">
        <id>P98078</id>
    </interactant>
    <interactant intactId="EBI-1642835">
        <id>O94973</id>
        <label>AP2A2</label>
    </interactant>
    <organismsDiffer>true</organismsDiffer>
    <experiments>2</experiments>
</comment>
<comment type="interaction">
    <interactant intactId="EBI-1391846">
        <id>P98078</id>
    </interactant>
    <interactant intactId="EBI-739789">
        <id>Q92997</id>
        <label>DVL3</label>
    </interactant>
    <organismsDiffer>true</organismsDiffer>
    <experiments>2</experiments>
</comment>
<comment type="interaction">
    <interactant intactId="EBI-1391846">
        <id>P98078</id>
    </interactant>
    <interactant intactId="EBI-2609756">
        <id>Q0JRZ9</id>
        <label>FCHO2</label>
    </interactant>
    <organismsDiffer>true</organismsDiffer>
    <experiments>4</experiments>
</comment>
<comment type="interaction">
    <interactant intactId="EBI-1391846">
        <id>P98078</id>
    </interactant>
    <interactant intactId="EBI-401755">
        <id>P62993</id>
        <label>GRB2</label>
    </interactant>
    <organismsDiffer>true</organismsDiffer>
    <experiments>4</experiments>
</comment>
<comment type="interaction">
    <interactant intactId="EBI-1391846">
        <id>P98078</id>
    </interactant>
    <interactant intactId="EBI-6307292">
        <id>Q9I8D1</id>
        <label>MYO6</label>
    </interactant>
    <organismsDiffer>true</organismsDiffer>
    <experiments>2</experiments>
</comment>
<comment type="interaction">
    <interactant intactId="EBI-1391846">
        <id>P98078</id>
    </interactant>
    <interactant intactId="EBI-350606">
        <id>Q9UM54</id>
        <label>MYO6</label>
    </interactant>
    <organismsDiffer>true</organismsDiffer>
    <experiments>4</experiments>
</comment>
<comment type="interaction">
    <interactant intactId="EBI-1391846">
        <id>P98078</id>
    </interactant>
    <interactant intactId="EBI-346595">
        <id>Q96B97</id>
        <label>SH3KBP1</label>
    </interactant>
    <organismsDiffer>true</organismsDiffer>
    <experiments>9</experiments>
</comment>
<comment type="interaction">
    <interactant intactId="EBI-6305891">
        <id>P98078-3</id>
    </interactant>
    <interactant intactId="EBI-6305825">
        <id>Q8C5D8</id>
        <label>Pias2</label>
    </interactant>
    <organismsDiffer>false</organismsDiffer>
    <experiments>3</experiments>
</comment>
<comment type="subcellular location">
    <subcellularLocation>
        <location>Cytoplasmic vesicle</location>
        <location>Clathrin-coated vesicle membrane</location>
    </subcellularLocation>
    <subcellularLocation>
        <location>Membrane</location>
        <location>Clathrin-coated pit</location>
    </subcellularLocation>
    <text evidence="1">Colocalizes with large insert-containing isoforms of MYO6 at clathrin-coated pits/vesicles. During mitosis is progressively displaced from the membrane and translocated to the cytoplasm (By similarity).</text>
</comment>
<comment type="subcellular location">
    <molecule>Isoform p96</molecule>
    <subcellularLocation>
        <location>Membrane</location>
        <location>Clathrin-coated pit</location>
    </subcellularLocation>
    <text>Colocalizes with LDLR at clathrin-coated pits.</text>
</comment>
<comment type="subcellular location">
    <molecule>Isoform p67</molecule>
    <subcellularLocation>
        <location evidence="6">Cytoplasm</location>
    </subcellularLocation>
    <subcellularLocation>
        <location evidence="6">Nucleus</location>
    </subcellularLocation>
    <text>Diffuse localization in the cytoplasm; does not localize to clathrin-coated pits.</text>
</comment>
<comment type="alternative products">
    <event type="alternative splicing"/>
    <isoform>
        <id>P98078-1</id>
        <name>p96</name>
        <sequence type="displayed"/>
    </isoform>
    <isoform>
        <id>P98078-2</id>
        <name>p93</name>
        <sequence type="described" ref="VSP_004182"/>
    </isoform>
    <isoform>
        <id>P98078-3</id>
        <name>p67</name>
        <sequence type="described" ref="VSP_004183"/>
    </isoform>
</comment>
<comment type="tissue specificity">
    <text evidence="20">Isoform p96 and isoform p67 are expressed in adult kidney and fibroblasts with isoform p96 being the predominant form. Isoform p67 is the predominant isoform expressed in embryonic visceral endoderm.</text>
</comment>
<comment type="developmental stage">
    <text evidence="10 12">At 6.5 dpc specifically expressed in the cells of the visceral endoderm.</text>
</comment>
<comment type="domain">
    <text evidence="7 11">The PID domain binds to predominantly non-phosphorylated NPXY internalization motifs present in members of the LDLR and APP family; it also mediates simultaneous binding to phosphatidylinositol 4,5-bisphosphate (PubMed:11247302, PubMed:12234931).</text>
</comment>
<comment type="domain">
    <text evidence="26">The Asn-Pro-Phe (NPF) motifs, which are found in proteins involved in the endocytic pathway, mediate the interaction with the EH domain of EPS15, EPS15R and ITSN1.</text>
</comment>
<comment type="PTM">
    <text evidence="1">Phosphorylated on serine residues in response to mitogenic growth-factor stimulation. Phosphorylation during mitosis is leading to membrane displacement (By similarity).</text>
</comment>
<comment type="disruption phenotype">
    <text evidence="10 12">Embryonic lethal; embryos arrest prior to gastrulation and show lack of endodermal organization, failure to thin the distal tip visceral endoderm (VE), elongate the extra-embryonic portion of the egg cylinder and properly organize the epiblast. Loss of the specific megalin/LRP2 lipoprotein receptor distribution at the brush border at the apical cell edge in presumptive VE cells. Conditionally mutant mice are overtly normal, but have reduced clathrin-coated pits in kidney proximal tubule cells and excrete specific plasma proteins in the urine, consistent with reduced transport by LRP2 in the proximal tubule.</text>
</comment>
<evidence type="ECO:0000250" key="1"/>
<evidence type="ECO:0000250" key="2">
    <source>
        <dbReference type="UniProtKB" id="O88797"/>
    </source>
</evidence>
<evidence type="ECO:0000250" key="3">
    <source>
        <dbReference type="UniProtKB" id="P98082"/>
    </source>
</evidence>
<evidence type="ECO:0000255" key="4">
    <source>
        <dbReference type="PROSITE-ProRule" id="PRU00148"/>
    </source>
</evidence>
<evidence type="ECO:0000256" key="5">
    <source>
        <dbReference type="SAM" id="MobiDB-lite"/>
    </source>
</evidence>
<evidence type="ECO:0000269" key="6">
    <source>
    </source>
</evidence>
<evidence type="ECO:0000269" key="7">
    <source>
    </source>
</evidence>
<evidence type="ECO:0000269" key="8">
    <source>
    </source>
</evidence>
<evidence type="ECO:0000269" key="9">
    <source>
    </source>
</evidence>
<evidence type="ECO:0000269" key="10">
    <source>
    </source>
</evidence>
<evidence type="ECO:0000269" key="11">
    <source>
    </source>
</evidence>
<evidence type="ECO:0000269" key="12">
    <source>
    </source>
</evidence>
<evidence type="ECO:0000269" key="13">
    <source>
    </source>
</evidence>
<evidence type="ECO:0000269" key="14">
    <source>
    </source>
</evidence>
<evidence type="ECO:0000269" key="15">
    <source>
    </source>
</evidence>
<evidence type="ECO:0000269" key="16">
    <source>
    </source>
</evidence>
<evidence type="ECO:0000269" key="17">
    <source>
    </source>
</evidence>
<evidence type="ECO:0000269" key="18">
    <source>
    </source>
</evidence>
<evidence type="ECO:0000269" key="19">
    <source>
    </source>
</evidence>
<evidence type="ECO:0000269" key="20">
    <source>
    </source>
</evidence>
<evidence type="ECO:0000269" key="21">
    <source>
    </source>
</evidence>
<evidence type="ECO:0000269" key="22">
    <source>
    </source>
</evidence>
<evidence type="ECO:0000269" key="23">
    <source>
    </source>
</evidence>
<evidence type="ECO:0000269" key="24">
    <source>
    </source>
</evidence>
<evidence type="ECO:0000269" key="25">
    <source>
    </source>
</evidence>
<evidence type="ECO:0000269" key="26">
    <source>
    </source>
</evidence>
<evidence type="ECO:0000269" key="27">
    <source>
    </source>
</evidence>
<evidence type="ECO:0000303" key="28">
    <source>
    </source>
</evidence>
<evidence type="ECO:0000303" key="29">
    <source>
    </source>
</evidence>
<evidence type="ECO:0000305" key="30"/>
<evidence type="ECO:0007744" key="31">
    <source>
    </source>
</evidence>
<evidence type="ECO:0007744" key="32">
    <source>
    </source>
</evidence>
<evidence type="ECO:0007829" key="33">
    <source>
        <dbReference type="PDB" id="1P3R"/>
    </source>
</evidence>
<feature type="initiator methionine" description="Removed" evidence="3">
    <location>
        <position position="1"/>
    </location>
</feature>
<feature type="chain" id="PRO_0000079771" description="Disabled homolog 2">
    <location>
        <begin position="2"/>
        <end position="766"/>
    </location>
</feature>
<feature type="domain" description="PID" evidence="4">
    <location>
        <begin position="45"/>
        <end position="196"/>
    </location>
</feature>
<feature type="region of interest" description="Disordered" evidence="5">
    <location>
        <begin position="1"/>
        <end position="36"/>
    </location>
</feature>
<feature type="region of interest" description="Required for localization to clathrin-coated pits">
    <location>
        <begin position="230"/>
        <end position="447"/>
    </location>
</feature>
<feature type="region of interest" description="Disordered" evidence="5">
    <location>
        <begin position="284"/>
        <end position="482"/>
    </location>
</feature>
<feature type="region of interest" description="Disordered" evidence="5">
    <location>
        <begin position="596"/>
        <end position="630"/>
    </location>
</feature>
<feature type="region of interest" description="Sufficient for interaction with GRB2" evidence="27">
    <location>
        <begin position="600"/>
        <end position="730"/>
    </location>
</feature>
<feature type="region of interest" description="Required for interaction with CSK" evidence="1">
    <location>
        <begin position="617"/>
        <end position="625"/>
    </location>
</feature>
<feature type="region of interest" description="Required for interaction with MYO6" evidence="9">
    <location>
        <begin position="647"/>
        <end position="766"/>
    </location>
</feature>
<feature type="region of interest" description="Disordered" evidence="5">
    <location>
        <begin position="659"/>
        <end position="683"/>
    </location>
</feature>
<feature type="region of interest" description="Required for interaction with GRB2 and CSK" evidence="1">
    <location>
        <begin position="661"/>
        <end position="669"/>
    </location>
</feature>
<feature type="region of interest" description="Disordered" evidence="5">
    <location>
        <begin position="699"/>
        <end position="766"/>
    </location>
</feature>
<feature type="region of interest" description="Sufficient for interaction with SH3KBP1 SH3 domain">
    <location>
        <begin position="707"/>
        <end position="723"/>
    </location>
</feature>
<feature type="short sequence motif" description="DPF 1">
    <location>
        <begin position="293"/>
        <end position="295"/>
    </location>
</feature>
<feature type="short sequence motif" description="DPF 2">
    <location>
        <begin position="298"/>
        <end position="300"/>
    </location>
</feature>
<feature type="compositionally biased region" description="Polar residues" evidence="5">
    <location>
        <begin position="1"/>
        <end position="16"/>
    </location>
</feature>
<feature type="compositionally biased region" description="Polar residues" evidence="5">
    <location>
        <begin position="303"/>
        <end position="334"/>
    </location>
</feature>
<feature type="compositionally biased region" description="Polar residues" evidence="5">
    <location>
        <begin position="367"/>
        <end position="381"/>
    </location>
</feature>
<feature type="compositionally biased region" description="Polar residues" evidence="5">
    <location>
        <begin position="467"/>
        <end position="480"/>
    </location>
</feature>
<feature type="compositionally biased region" description="Low complexity" evidence="5">
    <location>
        <begin position="600"/>
        <end position="612"/>
    </location>
</feature>
<feature type="compositionally biased region" description="Polar residues" evidence="5">
    <location>
        <begin position="673"/>
        <end position="683"/>
    </location>
</feature>
<feature type="compositionally biased region" description="Polar residues" evidence="5">
    <location>
        <begin position="727"/>
        <end position="753"/>
    </location>
</feature>
<feature type="modified residue" description="N-acetylserine" evidence="3">
    <location>
        <position position="2"/>
    </location>
</feature>
<feature type="modified residue" description="Phosphoserine" evidence="2">
    <location>
        <position position="2"/>
    </location>
</feature>
<feature type="modified residue" description="Phosphotyrosine" evidence="32">
    <location>
        <position position="170"/>
    </location>
</feature>
<feature type="modified residue" description="Phosphoserine" evidence="32">
    <location>
        <position position="193"/>
    </location>
</feature>
<feature type="modified residue" description="Phosphoserine" evidence="31">
    <location>
        <position position="323"/>
    </location>
</feature>
<feature type="modified residue" description="Phosphoserine; in mitosis" evidence="2">
    <location>
        <position position="326"/>
    </location>
</feature>
<feature type="modified residue" description="Phosphoserine; in mitosis" evidence="2">
    <location>
        <position position="328"/>
    </location>
</feature>
<feature type="modified residue" description="Phosphoserine" evidence="3">
    <location>
        <position position="401"/>
    </location>
</feature>
<feature type="modified residue" description="Phosphothreonine" evidence="32">
    <location>
        <position position="671"/>
    </location>
</feature>
<feature type="modified residue" description="Phosphoserine" evidence="31 32">
    <location>
        <position position="727"/>
    </location>
</feature>
<feature type="modified residue" description="Phosphoserine" evidence="32">
    <location>
        <position position="759"/>
    </location>
</feature>
<feature type="splice variant" id="VSP_004182" description="In isoform p93." evidence="29">
    <location>
        <begin position="209"/>
        <end position="229"/>
    </location>
</feature>
<feature type="splice variant" id="VSP_004183" description="In isoform p67." evidence="28 29">
    <location>
        <begin position="230"/>
        <end position="447"/>
    </location>
</feature>
<feature type="mutagenesis site" description="Abolishes binding to PtdIns(4,5)P2." evidence="14 22">
    <original>K</original>
    <variation>A</variation>
    <location>
        <position position="53"/>
    </location>
</feature>
<feature type="mutagenesis site" description="Abolishes LDLR endocytosis." evidence="14 22">
    <original>K</original>
    <variation>Q</variation>
    <location>
        <position position="53"/>
    </location>
</feature>
<feature type="mutagenesis site" description="Abolishes binding to PtdIns(4,5)P2." evidence="14">
    <original>K</original>
    <variation>A</variation>
    <location>
        <position position="90"/>
    </location>
</feature>
<feature type="mutagenesis site" description="Abolishes LDLR endocytosis." evidence="21 22">
    <original>S</original>
    <variation>T</variation>
    <location>
        <position position="122"/>
    </location>
</feature>
<feature type="mutagenesis site" description="Impairs LDLR endocytosis." evidence="21 22">
    <original>S</original>
    <variation>Y</variation>
    <location>
        <position position="122"/>
    </location>
</feature>
<feature type="mutagenesis site" description="Abolishes interaction with ITSN1, fails to internalize integrin beta-1; when associated with V-398, V-589, V-736 and V-765." evidence="26">
    <original>F</original>
    <variation>V</variation>
    <location>
        <position position="255"/>
    </location>
</feature>
<feature type="mutagenesis site" description="Loss of interaction with FCHO2; when associated with A-299." evidence="25">
    <original>P</original>
    <variation>A</variation>
    <location>
        <position position="294"/>
    </location>
</feature>
<feature type="mutagenesis site" description="Loss of interaction with FCHO2; when associated with A-294." evidence="25">
    <original>P</original>
    <variation>A</variation>
    <location>
        <position position="299"/>
    </location>
</feature>
<feature type="mutagenesis site" description="Abolishes interaction with ITSN1, fails to internalize integrin beta-1; when associated with V-255, V-589, V-736 and V-765." evidence="26">
    <original>F</original>
    <variation>V</variation>
    <location>
        <position position="398"/>
    </location>
</feature>
<feature type="mutagenesis site" description="Abolishes interaction with EPS15 and impairs interaction with ITSN1, fails to internalize integrin beta-1; when associated with V-736 and V-765. Abolishes interaction with ITSN1; when associated with V-255, V-398, V-736 and V-765." evidence="26">
    <original>F</original>
    <variation>V</variation>
    <location>
        <position position="589"/>
    </location>
</feature>
<feature type="mutagenesis site" description="Abolishes interaction with EPS15 and impairs interaction with ITSN1, fails to internalize integrin beta-1; when associated with V-589 and V-765. Abolishes interaction with ITSN1; when associated with V-255, V-398, V-589, and V-765." evidence="26">
    <original>F</original>
    <variation>V</variation>
    <location>
        <position position="736"/>
    </location>
</feature>
<feature type="mutagenesis site" description="Abolishes interaction with EPS15 and impairs interaction with ITSN1, fails to internalize integrin beta-1; when associated with V-589 and V-736. Abolishes interaction with ITSN1; when associated with V-255, V-398, V-589 and V-736." evidence="26">
    <original>F</original>
    <variation>V</variation>
    <location>
        <position position="765"/>
    </location>
</feature>
<feature type="sequence conflict" description="In Ref. 4; AAH06588." evidence="30" ref="4">
    <original>T</original>
    <variation>A</variation>
    <location>
        <position position="10"/>
    </location>
</feature>
<feature type="sequence conflict" description="In Ref. 4; AAH06588." evidence="30" ref="4">
    <original>D</original>
    <variation>G</variation>
    <location>
        <position position="224"/>
    </location>
</feature>
<feature type="sequence conflict" description="In Ref. 1; AAB02646/AAB02645." evidence="30" ref="1">
    <original>G</original>
    <variation>V</variation>
    <location>
        <position position="338"/>
    </location>
</feature>
<feature type="sequence conflict" description="In Ref. 1; AAB02645/AAB02646/AAB02647 and 2; AAG44669." evidence="30" ref="1 2">
    <original>L</original>
    <variation>P</variation>
    <location>
        <position position="454"/>
    </location>
</feature>
<feature type="sequence conflict" description="In Ref. 1; AAB02645/AAB02646/AAB02647 and 2; AAG44669." evidence="30" ref="1 2">
    <original>A</original>
    <variation>P</variation>
    <location>
        <position position="490"/>
    </location>
</feature>
<feature type="sequence conflict" description="In Ref. 3; BAE32784 and 4; AAH16887/AAH06588." evidence="30" ref="3 4">
    <original>R</original>
    <variation>G</variation>
    <location>
        <position position="536"/>
    </location>
</feature>
<feature type="sequence conflict" description="In Ref. 4; AAH06588." evidence="30" ref="4">
    <original>S</original>
    <variation>P</variation>
    <location>
        <position position="553"/>
    </location>
</feature>
<feature type="helix" evidence="33">
    <location>
        <begin position="36"/>
        <end position="43"/>
    </location>
</feature>
<feature type="strand" evidence="33">
    <location>
        <begin position="48"/>
        <end position="63"/>
    </location>
</feature>
<feature type="helix" evidence="33">
    <location>
        <begin position="66"/>
        <end position="84"/>
    </location>
</feature>
<feature type="turn" evidence="33">
    <location>
        <begin position="85"/>
        <end position="87"/>
    </location>
</feature>
<feature type="strand" evidence="33">
    <location>
        <begin position="91"/>
        <end position="98"/>
    </location>
</feature>
<feature type="strand" evidence="33">
    <location>
        <begin position="101"/>
        <end position="106"/>
    </location>
</feature>
<feature type="turn" evidence="33">
    <location>
        <begin position="107"/>
        <end position="109"/>
    </location>
</feature>
<feature type="strand" evidence="33">
    <location>
        <begin position="112"/>
        <end position="116"/>
    </location>
</feature>
<feature type="helix" evidence="33">
    <location>
        <begin position="118"/>
        <end position="120"/>
    </location>
</feature>
<feature type="strand" evidence="33">
    <location>
        <begin position="121"/>
        <end position="126"/>
    </location>
</feature>
<feature type="strand" evidence="33">
    <location>
        <begin position="133"/>
        <end position="140"/>
    </location>
</feature>
<feature type="strand" evidence="33">
    <location>
        <begin position="144"/>
        <end position="153"/>
    </location>
</feature>
<feature type="helix" evidence="33">
    <location>
        <begin position="156"/>
        <end position="177"/>
    </location>
</feature>
<sequence length="766" mass="82312">MSNEVETSTTNGQPDQQAAPKAPSKKEKKKGSEKTDEYLLARFKGDGVKYKAKLIGIDDVPDARGDKMSQDSMMKLKGMAAAGRSQGQHKQRIWVNISLSGIKIIDEKTGVIEHEHPVNKISFIARDVTDNRAFGYVCGGEGQHQFFAIKTGQQAEPLVVDLKDLFQVIYNVKKKEEDKKKVEEANKAEENGSEALMTLDDQANKLKLGVDQMDLFGDMSTPPDLNSPTESKDILLVDLNSEIDTNQNSLRENPFLTNGVTSCSLPRPKPQASFLPENAFSANLNFFPTPNPDPFRDDPFAQPDQSAPSSFDSLTSPDQKKASLSSSSTPQSKGPLNGDTDYFGQQFDQLSNRTGKPEAQGGPWPYPSSQTQQAVRTQNGVSEREQNGFHIKSSPNPFVGSPPKGLSVPNGVKQDLESSVQSSAHDSIAIIPPPQSTKPGRGRRTAKSSANDLLASDIFASEPPGQMSPTGQPAVPQSNFLDLFKGNAPAPVGPLVGLGTVPVTPPQAGPWTPVVYSPSTTVVPGAIISGQPPSFRQPLVFGTTPAVQVWNQSPSFATPASPPPPTVWCPTTSVAPNAWSSTSPLGNPFQSNNIFPPPTMSTQSSPQPMMSSVLATPPQPPPRNGPLKDIPSDAFTGLDPLGDKEVKEVKEMFKDFQLRQPPLVPSRKGETPPSGTSSAFSSYFNNKVGIPQEHVDHDDFDANQLLNKINEPPKPAPRQGVLLGTKSADNSLENPFSKGFSSSNPSVVSQPASSDPHRSPFGNPFA</sequence>
<dbReference type="EMBL" id="U18869">
    <property type="protein sequence ID" value="AAB02646.1"/>
    <property type="molecule type" value="mRNA"/>
</dbReference>
<dbReference type="EMBL" id="U18869">
    <property type="protein sequence ID" value="AAB02647.1"/>
    <property type="molecule type" value="mRNA"/>
</dbReference>
<dbReference type="EMBL" id="U18869">
    <property type="protein sequence ID" value="AAB02645.1"/>
    <property type="molecule type" value="mRNA"/>
</dbReference>
<dbReference type="EMBL" id="AF260580">
    <property type="protein sequence ID" value="AAG44669.1"/>
    <property type="molecule type" value="Genomic_DNA"/>
</dbReference>
<dbReference type="EMBL" id="AK154716">
    <property type="protein sequence ID" value="BAE32784.1"/>
    <property type="molecule type" value="mRNA"/>
</dbReference>
<dbReference type="EMBL" id="BC016887">
    <property type="protein sequence ID" value="AAH16887.1"/>
    <property type="molecule type" value="mRNA"/>
</dbReference>
<dbReference type="EMBL" id="BC006588">
    <property type="protein sequence ID" value="AAH06588.1"/>
    <property type="molecule type" value="mRNA"/>
</dbReference>
<dbReference type="CCDS" id="CCDS37029.1">
    <molecule id="P98078-1"/>
</dbReference>
<dbReference type="CCDS" id="CCDS37030.1">
    <molecule id="P98078-3"/>
</dbReference>
<dbReference type="CCDS" id="CCDS79357.1">
    <molecule id="P98078-2"/>
</dbReference>
<dbReference type="RefSeq" id="NP_001008702.1">
    <property type="nucleotide sequence ID" value="NM_001008702.2"/>
</dbReference>
<dbReference type="RefSeq" id="NP_001032994.1">
    <property type="nucleotide sequence ID" value="NM_001037905.3"/>
</dbReference>
<dbReference type="RefSeq" id="NP_075607.2">
    <property type="nucleotide sequence ID" value="NM_023118.5"/>
</dbReference>
<dbReference type="RefSeq" id="XP_011243626.1">
    <property type="nucleotide sequence ID" value="XM_011245324.1"/>
</dbReference>
<dbReference type="RefSeq" id="XP_017171913.1">
    <property type="nucleotide sequence ID" value="XM_017316424.1"/>
</dbReference>
<dbReference type="PDB" id="1M7E">
    <property type="method" value="X-ray"/>
    <property type="resolution" value="2.45 A"/>
    <property type="chains" value="A/B/C=33-191"/>
</dbReference>
<dbReference type="PDB" id="1P3R">
    <property type="method" value="X-ray"/>
    <property type="resolution" value="2.10 A"/>
    <property type="chains" value="A/B/C=32-191"/>
</dbReference>
<dbReference type="PDBsum" id="1M7E"/>
<dbReference type="PDBsum" id="1P3R"/>
<dbReference type="BMRB" id="P98078"/>
<dbReference type="SMR" id="P98078"/>
<dbReference type="BioGRID" id="199043">
    <property type="interactions" value="23"/>
</dbReference>
<dbReference type="CORUM" id="P98078"/>
<dbReference type="DIP" id="DIP-39422N"/>
<dbReference type="FunCoup" id="P98078">
    <property type="interactions" value="1113"/>
</dbReference>
<dbReference type="IntAct" id="P98078">
    <property type="interactions" value="53"/>
</dbReference>
<dbReference type="MINT" id="P98078"/>
<dbReference type="STRING" id="10090.ENSMUSP00000079689"/>
<dbReference type="GlyGen" id="P98078">
    <property type="glycosylation" value="9 sites, 1 O-linked glycan (5 sites)"/>
</dbReference>
<dbReference type="iPTMnet" id="P98078"/>
<dbReference type="PhosphoSitePlus" id="P98078"/>
<dbReference type="SwissPalm" id="P98078"/>
<dbReference type="jPOST" id="P98078"/>
<dbReference type="PaxDb" id="10090-ENSMUSP00000079689"/>
<dbReference type="PeptideAtlas" id="P98078"/>
<dbReference type="ProteomicsDB" id="279873">
    <molecule id="P98078-1"/>
</dbReference>
<dbReference type="ProteomicsDB" id="279874">
    <molecule id="P98078-2"/>
</dbReference>
<dbReference type="ProteomicsDB" id="279875">
    <molecule id="P98078-3"/>
</dbReference>
<dbReference type="Pumba" id="P98078"/>
<dbReference type="DNASU" id="13132"/>
<dbReference type="GeneID" id="13132"/>
<dbReference type="KEGG" id="mmu:13132"/>
<dbReference type="UCSC" id="uc007vde.1">
    <molecule id="P98078-1"/>
    <property type="organism name" value="mouse"/>
</dbReference>
<dbReference type="AGR" id="MGI:109175"/>
<dbReference type="CTD" id="1601"/>
<dbReference type="MGI" id="MGI:109175">
    <property type="gene designation" value="Dab2"/>
</dbReference>
<dbReference type="eggNOG" id="KOG3535">
    <property type="taxonomic scope" value="Eukaryota"/>
</dbReference>
<dbReference type="InParanoid" id="P98078"/>
<dbReference type="OrthoDB" id="10069833at2759"/>
<dbReference type="PhylomeDB" id="P98078"/>
<dbReference type="TreeFam" id="TF316724"/>
<dbReference type="Reactome" id="R-MMU-190873">
    <property type="pathway name" value="Gap junction degradation"/>
</dbReference>
<dbReference type="Reactome" id="R-MMU-196025">
    <property type="pathway name" value="Formation of annular gap junctions"/>
</dbReference>
<dbReference type="Reactome" id="R-MMU-8856825">
    <property type="pathway name" value="Cargo recognition for clathrin-mediated endocytosis"/>
</dbReference>
<dbReference type="Reactome" id="R-MMU-8856828">
    <property type="pathway name" value="Clathrin-mediated endocytosis"/>
</dbReference>
<dbReference type="BioGRID-ORCS" id="13132">
    <property type="hits" value="0 hits in 45 CRISPR screens"/>
</dbReference>
<dbReference type="ChiTaRS" id="Dab2">
    <property type="organism name" value="mouse"/>
</dbReference>
<dbReference type="EvolutionaryTrace" id="P98078"/>
<dbReference type="PRO" id="PR:P98078"/>
<dbReference type="Proteomes" id="UP000000589">
    <property type="component" value="Unplaced"/>
</dbReference>
<dbReference type="RNAct" id="P98078">
    <property type="molecule type" value="protein"/>
</dbReference>
<dbReference type="GO" id="GO:0016324">
    <property type="term" value="C:apical plasma membrane"/>
    <property type="evidence" value="ECO:0000314"/>
    <property type="project" value="MGI"/>
</dbReference>
<dbReference type="GO" id="GO:0030132">
    <property type="term" value="C:clathrin coat of coated pit"/>
    <property type="evidence" value="ECO:0000314"/>
    <property type="project" value="UniProtKB"/>
</dbReference>
<dbReference type="GO" id="GO:0030665">
    <property type="term" value="C:clathrin-coated vesicle membrane"/>
    <property type="evidence" value="ECO:0007669"/>
    <property type="project" value="UniProtKB-SubCell"/>
</dbReference>
<dbReference type="GO" id="GO:0005737">
    <property type="term" value="C:cytoplasm"/>
    <property type="evidence" value="ECO:0000314"/>
    <property type="project" value="MGI"/>
</dbReference>
<dbReference type="GO" id="GO:0005634">
    <property type="term" value="C:nucleus"/>
    <property type="evidence" value="ECO:0000314"/>
    <property type="project" value="MGI"/>
</dbReference>
<dbReference type="GO" id="GO:0005886">
    <property type="term" value="C:plasma membrane"/>
    <property type="evidence" value="ECO:0000314"/>
    <property type="project" value="MGI"/>
</dbReference>
<dbReference type="GO" id="GO:0035612">
    <property type="term" value="F:AP-2 adaptor complex binding"/>
    <property type="evidence" value="ECO:0000314"/>
    <property type="project" value="UniProtKB"/>
</dbReference>
<dbReference type="GO" id="GO:0038024">
    <property type="term" value="F:cargo receptor activity"/>
    <property type="evidence" value="ECO:0000314"/>
    <property type="project" value="UniProtKB"/>
</dbReference>
<dbReference type="GO" id="GO:0035615">
    <property type="term" value="F:clathrin adaptor activity"/>
    <property type="evidence" value="ECO:0000314"/>
    <property type="project" value="UniProtKB"/>
</dbReference>
<dbReference type="GO" id="GO:0030276">
    <property type="term" value="F:clathrin binding"/>
    <property type="evidence" value="ECO:0000314"/>
    <property type="project" value="UniProtKB"/>
</dbReference>
<dbReference type="GO" id="GO:0005178">
    <property type="term" value="F:integrin binding"/>
    <property type="evidence" value="ECO:0000315"/>
    <property type="project" value="UniProtKB"/>
</dbReference>
<dbReference type="GO" id="GO:0035091">
    <property type="term" value="F:phosphatidylinositol binding"/>
    <property type="evidence" value="ECO:0000314"/>
    <property type="project" value="UniProtKB"/>
</dbReference>
<dbReference type="GO" id="GO:0005546">
    <property type="term" value="F:phosphatidylinositol-4,5-bisphosphate binding"/>
    <property type="evidence" value="ECO:0000314"/>
    <property type="project" value="UniProtKB"/>
</dbReference>
<dbReference type="GO" id="GO:0000902">
    <property type="term" value="P:cell morphogenesis"/>
    <property type="evidence" value="ECO:0000315"/>
    <property type="project" value="MGI"/>
</dbReference>
<dbReference type="GO" id="GO:0071560">
    <property type="term" value="P:cellular response to transforming growth factor beta stimulus"/>
    <property type="evidence" value="ECO:0000314"/>
    <property type="project" value="UniProtKB"/>
</dbReference>
<dbReference type="GO" id="GO:0048268">
    <property type="term" value="P:clathrin coat assembly"/>
    <property type="evidence" value="ECO:0000314"/>
    <property type="project" value="UniProtKB"/>
</dbReference>
<dbReference type="GO" id="GO:0006897">
    <property type="term" value="P:endocytosis"/>
    <property type="evidence" value="ECO:0007669"/>
    <property type="project" value="UniProtKB-KW"/>
</dbReference>
<dbReference type="GO" id="GO:0007492">
    <property type="term" value="P:endoderm development"/>
    <property type="evidence" value="ECO:0000315"/>
    <property type="project" value="MGI"/>
</dbReference>
<dbReference type="GO" id="GO:0051649">
    <property type="term" value="P:establishment of localization in cell"/>
    <property type="evidence" value="ECO:0000315"/>
    <property type="project" value="MGI"/>
</dbReference>
<dbReference type="GO" id="GO:0097191">
    <property type="term" value="P:extrinsic apoptotic signaling pathway"/>
    <property type="evidence" value="ECO:0000315"/>
    <property type="project" value="MGI"/>
</dbReference>
<dbReference type="GO" id="GO:0071425">
    <property type="term" value="P:hematopoietic stem cell proliferation"/>
    <property type="evidence" value="ECO:0000314"/>
    <property type="project" value="MGI"/>
</dbReference>
<dbReference type="GO" id="GO:0001701">
    <property type="term" value="P:in utero embryonic development"/>
    <property type="evidence" value="ECO:0000315"/>
    <property type="project" value="MGI"/>
</dbReference>
<dbReference type="GO" id="GO:0030099">
    <property type="term" value="P:myeloid cell differentiation"/>
    <property type="evidence" value="ECO:0000270"/>
    <property type="project" value="UniProtKB"/>
</dbReference>
<dbReference type="GO" id="GO:0043066">
    <property type="term" value="P:negative regulation of apoptotic process"/>
    <property type="evidence" value="ECO:0000315"/>
    <property type="project" value="UniProtKB"/>
</dbReference>
<dbReference type="GO" id="GO:2001237">
    <property type="term" value="P:negative regulation of extrinsic apoptotic signaling pathway"/>
    <property type="evidence" value="ECO:0000315"/>
    <property type="project" value="MGI"/>
</dbReference>
<dbReference type="GO" id="GO:1903077">
    <property type="term" value="P:negative regulation of protein localization to plasma membrane"/>
    <property type="evidence" value="ECO:0000315"/>
    <property type="project" value="UniProtKB"/>
</dbReference>
<dbReference type="GO" id="GO:0006907">
    <property type="term" value="P:pinocytosis"/>
    <property type="evidence" value="ECO:0000315"/>
    <property type="project" value="MGI"/>
</dbReference>
<dbReference type="GO" id="GO:0045785">
    <property type="term" value="P:positive regulation of cell adhesion"/>
    <property type="evidence" value="ECO:0000314"/>
    <property type="project" value="UniProtKB"/>
</dbReference>
<dbReference type="GO" id="GO:0030335">
    <property type="term" value="P:positive regulation of cell migration"/>
    <property type="evidence" value="ECO:0000315"/>
    <property type="project" value="UniProtKB"/>
</dbReference>
<dbReference type="GO" id="GO:2000370">
    <property type="term" value="P:positive regulation of clathrin-dependent endocytosis"/>
    <property type="evidence" value="ECO:0000314"/>
    <property type="project" value="UniProtKB"/>
</dbReference>
<dbReference type="GO" id="GO:0010718">
    <property type="term" value="P:positive regulation of epithelial to mesenchymal transition"/>
    <property type="evidence" value="ECO:0000315"/>
    <property type="project" value="UniProtKB"/>
</dbReference>
<dbReference type="GO" id="GO:2001046">
    <property type="term" value="P:positive regulation of integrin-mediated signaling pathway"/>
    <property type="evidence" value="ECO:0000315"/>
    <property type="project" value="UniProtKB"/>
</dbReference>
<dbReference type="GO" id="GO:0046330">
    <property type="term" value="P:positive regulation of JNK cascade"/>
    <property type="evidence" value="ECO:0000314"/>
    <property type="project" value="GO_Central"/>
</dbReference>
<dbReference type="GO" id="GO:0002092">
    <property type="term" value="P:positive regulation of receptor internalization"/>
    <property type="evidence" value="ECO:0000315"/>
    <property type="project" value="CACAO"/>
</dbReference>
<dbReference type="GO" id="GO:0001921">
    <property type="term" value="P:positive regulation of receptor recycling"/>
    <property type="evidence" value="ECO:0000315"/>
    <property type="project" value="UniProtKB"/>
</dbReference>
<dbReference type="GO" id="GO:1900026">
    <property type="term" value="P:positive regulation of substrate adhesion-dependent cell spreading"/>
    <property type="evidence" value="ECO:0000314"/>
    <property type="project" value="UniProtKB"/>
</dbReference>
<dbReference type="GO" id="GO:0032968">
    <property type="term" value="P:positive regulation of transcription elongation by RNA polymerase II"/>
    <property type="evidence" value="ECO:0000315"/>
    <property type="project" value="UniProtKB"/>
</dbReference>
<dbReference type="GO" id="GO:0015031">
    <property type="term" value="P:protein transport"/>
    <property type="evidence" value="ECO:0007669"/>
    <property type="project" value="UniProtKB-KW"/>
</dbReference>
<dbReference type="GO" id="GO:0097017">
    <property type="term" value="P:renal protein absorption"/>
    <property type="evidence" value="ECO:0000315"/>
    <property type="project" value="MGI"/>
</dbReference>
<dbReference type="GO" id="GO:0016055">
    <property type="term" value="P:Wnt signaling pathway"/>
    <property type="evidence" value="ECO:0007669"/>
    <property type="project" value="UniProtKB-KW"/>
</dbReference>
<dbReference type="CDD" id="cd01215">
    <property type="entry name" value="PTB_Dab"/>
    <property type="match status" value="1"/>
</dbReference>
<dbReference type="FunFam" id="2.30.29.30:FF:000035">
    <property type="entry name" value="Disabled homolog 2 isoform 1"/>
    <property type="match status" value="1"/>
</dbReference>
<dbReference type="Gene3D" id="2.30.29.30">
    <property type="entry name" value="Pleckstrin-homology domain (PH domain)/Phosphotyrosine-binding domain (PTB)"/>
    <property type="match status" value="1"/>
</dbReference>
<dbReference type="InterPro" id="IPR048559">
    <property type="entry name" value="DAB1/2_SBM"/>
</dbReference>
<dbReference type="InterPro" id="IPR048561">
    <property type="entry name" value="Dab_PTB"/>
</dbReference>
<dbReference type="InterPro" id="IPR011993">
    <property type="entry name" value="PH-like_dom_sf"/>
</dbReference>
<dbReference type="InterPro" id="IPR006020">
    <property type="entry name" value="PTB/PI_dom"/>
</dbReference>
<dbReference type="PANTHER" id="PTHR47695:SF5">
    <property type="entry name" value="DISABLED HOMOLOG 2"/>
    <property type="match status" value="1"/>
</dbReference>
<dbReference type="PANTHER" id="PTHR47695">
    <property type="entry name" value="PID DOMAIN-CONTAINING PROTEIN"/>
    <property type="match status" value="1"/>
</dbReference>
<dbReference type="Pfam" id="PF21792">
    <property type="entry name" value="DAB2_SBM"/>
    <property type="match status" value="1"/>
</dbReference>
<dbReference type="Pfam" id="PF00640">
    <property type="entry name" value="PID"/>
    <property type="match status" value="1"/>
</dbReference>
<dbReference type="SMART" id="SM00462">
    <property type="entry name" value="PTB"/>
    <property type="match status" value="1"/>
</dbReference>
<dbReference type="SUPFAM" id="SSF50729">
    <property type="entry name" value="PH domain-like"/>
    <property type="match status" value="1"/>
</dbReference>
<dbReference type="PROSITE" id="PS01179">
    <property type="entry name" value="PID"/>
    <property type="match status" value="1"/>
</dbReference>
<gene>
    <name type="primary">Dab2</name>
    <name type="synonym">Doc2</name>
</gene>
<accession>P98078</accession>
<accession>Q3U3K1</accession>
<accession>Q91W56</accession>
<accession>Q923E1</accession>
<reference key="1">
    <citation type="journal article" date="1995" name="J. Biol. Chem.">
        <title>Cloning of a novel phosphoprotein regulated by colony-stimulating factor 1 shares a domain with the Drosophila disabled gene product.</title>
        <authorList>
            <person name="Xu X.-X."/>
            <person name="Yang W."/>
            <person name="Jackowski S."/>
            <person name="Rock C.O."/>
        </authorList>
    </citation>
    <scope>NUCLEOTIDE SEQUENCE [MRNA] (ISOFORMS P67; P93 AND P96)</scope>
    <source>
        <strain>BALB/cJ</strain>
        <tissue>Macrophage</tissue>
    </source>
</reference>
<reference key="2">
    <citation type="journal article" date="2001" name="Gene">
        <title>Chromosomal location of murine disabled-2 gene and structural comparison with its human ortholog.</title>
        <authorList>
            <person name="Sheng Z."/>
            <person name="Smith E.R."/>
            <person name="He J."/>
            <person name="Tuppen J.A."/>
            <person name="Martin W.D."/>
            <person name="Dong F.B."/>
            <person name="Xu X.X."/>
        </authorList>
    </citation>
    <scope>NUCLEOTIDE SEQUENCE [GENOMIC DNA]</scope>
    <scope>ALTERNATIVE SPLICING (ISOFORM P96)</scope>
    <source>
        <strain>129/Sv</strain>
    </source>
</reference>
<reference key="3">
    <citation type="journal article" date="2005" name="Science">
        <title>The transcriptional landscape of the mammalian genome.</title>
        <authorList>
            <person name="Carninci P."/>
            <person name="Kasukawa T."/>
            <person name="Katayama S."/>
            <person name="Gough J."/>
            <person name="Frith M.C."/>
            <person name="Maeda N."/>
            <person name="Oyama R."/>
            <person name="Ravasi T."/>
            <person name="Lenhard B."/>
            <person name="Wells C."/>
            <person name="Kodzius R."/>
            <person name="Shimokawa K."/>
            <person name="Bajic V.B."/>
            <person name="Brenner S.E."/>
            <person name="Batalov S."/>
            <person name="Forrest A.R."/>
            <person name="Zavolan M."/>
            <person name="Davis M.J."/>
            <person name="Wilming L.G."/>
            <person name="Aidinis V."/>
            <person name="Allen J.E."/>
            <person name="Ambesi-Impiombato A."/>
            <person name="Apweiler R."/>
            <person name="Aturaliya R.N."/>
            <person name="Bailey T.L."/>
            <person name="Bansal M."/>
            <person name="Baxter L."/>
            <person name="Beisel K.W."/>
            <person name="Bersano T."/>
            <person name="Bono H."/>
            <person name="Chalk A.M."/>
            <person name="Chiu K.P."/>
            <person name="Choudhary V."/>
            <person name="Christoffels A."/>
            <person name="Clutterbuck D.R."/>
            <person name="Crowe M.L."/>
            <person name="Dalla E."/>
            <person name="Dalrymple B.P."/>
            <person name="de Bono B."/>
            <person name="Della Gatta G."/>
            <person name="di Bernardo D."/>
            <person name="Down T."/>
            <person name="Engstrom P."/>
            <person name="Fagiolini M."/>
            <person name="Faulkner G."/>
            <person name="Fletcher C.F."/>
            <person name="Fukushima T."/>
            <person name="Furuno M."/>
            <person name="Futaki S."/>
            <person name="Gariboldi M."/>
            <person name="Georgii-Hemming P."/>
            <person name="Gingeras T.R."/>
            <person name="Gojobori T."/>
            <person name="Green R.E."/>
            <person name="Gustincich S."/>
            <person name="Harbers M."/>
            <person name="Hayashi Y."/>
            <person name="Hensch T.K."/>
            <person name="Hirokawa N."/>
            <person name="Hill D."/>
            <person name="Huminiecki L."/>
            <person name="Iacono M."/>
            <person name="Ikeo K."/>
            <person name="Iwama A."/>
            <person name="Ishikawa T."/>
            <person name="Jakt M."/>
            <person name="Kanapin A."/>
            <person name="Katoh M."/>
            <person name="Kawasawa Y."/>
            <person name="Kelso J."/>
            <person name="Kitamura H."/>
            <person name="Kitano H."/>
            <person name="Kollias G."/>
            <person name="Krishnan S.P."/>
            <person name="Kruger A."/>
            <person name="Kummerfeld S.K."/>
            <person name="Kurochkin I.V."/>
            <person name="Lareau L.F."/>
            <person name="Lazarevic D."/>
            <person name="Lipovich L."/>
            <person name="Liu J."/>
            <person name="Liuni S."/>
            <person name="McWilliam S."/>
            <person name="Madan Babu M."/>
            <person name="Madera M."/>
            <person name="Marchionni L."/>
            <person name="Matsuda H."/>
            <person name="Matsuzawa S."/>
            <person name="Miki H."/>
            <person name="Mignone F."/>
            <person name="Miyake S."/>
            <person name="Morris K."/>
            <person name="Mottagui-Tabar S."/>
            <person name="Mulder N."/>
            <person name="Nakano N."/>
            <person name="Nakauchi H."/>
            <person name="Ng P."/>
            <person name="Nilsson R."/>
            <person name="Nishiguchi S."/>
            <person name="Nishikawa S."/>
            <person name="Nori F."/>
            <person name="Ohara O."/>
            <person name="Okazaki Y."/>
            <person name="Orlando V."/>
            <person name="Pang K.C."/>
            <person name="Pavan W.J."/>
            <person name="Pavesi G."/>
            <person name="Pesole G."/>
            <person name="Petrovsky N."/>
            <person name="Piazza S."/>
            <person name="Reed J."/>
            <person name="Reid J.F."/>
            <person name="Ring B.Z."/>
            <person name="Ringwald M."/>
            <person name="Rost B."/>
            <person name="Ruan Y."/>
            <person name="Salzberg S.L."/>
            <person name="Sandelin A."/>
            <person name="Schneider C."/>
            <person name="Schoenbach C."/>
            <person name="Sekiguchi K."/>
            <person name="Semple C.A."/>
            <person name="Seno S."/>
            <person name="Sessa L."/>
            <person name="Sheng Y."/>
            <person name="Shibata Y."/>
            <person name="Shimada H."/>
            <person name="Shimada K."/>
            <person name="Silva D."/>
            <person name="Sinclair B."/>
            <person name="Sperling S."/>
            <person name="Stupka E."/>
            <person name="Sugiura K."/>
            <person name="Sultana R."/>
            <person name="Takenaka Y."/>
            <person name="Taki K."/>
            <person name="Tammoja K."/>
            <person name="Tan S.L."/>
            <person name="Tang S."/>
            <person name="Taylor M.S."/>
            <person name="Tegner J."/>
            <person name="Teichmann S.A."/>
            <person name="Ueda H.R."/>
            <person name="van Nimwegen E."/>
            <person name="Verardo R."/>
            <person name="Wei C.L."/>
            <person name="Yagi K."/>
            <person name="Yamanishi H."/>
            <person name="Zabarovsky E."/>
            <person name="Zhu S."/>
            <person name="Zimmer A."/>
            <person name="Hide W."/>
            <person name="Bult C."/>
            <person name="Grimmond S.M."/>
            <person name="Teasdale R.D."/>
            <person name="Liu E.T."/>
            <person name="Brusic V."/>
            <person name="Quackenbush J."/>
            <person name="Wahlestedt C."/>
            <person name="Mattick J.S."/>
            <person name="Hume D.A."/>
            <person name="Kai C."/>
            <person name="Sasaki D."/>
            <person name="Tomaru Y."/>
            <person name="Fukuda S."/>
            <person name="Kanamori-Katayama M."/>
            <person name="Suzuki M."/>
            <person name="Aoki J."/>
            <person name="Arakawa T."/>
            <person name="Iida J."/>
            <person name="Imamura K."/>
            <person name="Itoh M."/>
            <person name="Kato T."/>
            <person name="Kawaji H."/>
            <person name="Kawagashira N."/>
            <person name="Kawashima T."/>
            <person name="Kojima M."/>
            <person name="Kondo S."/>
            <person name="Konno H."/>
            <person name="Nakano K."/>
            <person name="Ninomiya N."/>
            <person name="Nishio T."/>
            <person name="Okada M."/>
            <person name="Plessy C."/>
            <person name="Shibata K."/>
            <person name="Shiraki T."/>
            <person name="Suzuki S."/>
            <person name="Tagami M."/>
            <person name="Waki K."/>
            <person name="Watahiki A."/>
            <person name="Okamura-Oho Y."/>
            <person name="Suzuki H."/>
            <person name="Kawai J."/>
            <person name="Hayashizaki Y."/>
        </authorList>
    </citation>
    <scope>NUCLEOTIDE SEQUENCE [LARGE SCALE MRNA] (ISOFORM P96)</scope>
    <source>
        <strain>NOD</strain>
        <tissue>Dendritic cell</tissue>
    </source>
</reference>
<reference key="4">
    <citation type="journal article" date="2004" name="Genome Res.">
        <title>The status, quality, and expansion of the NIH full-length cDNA project: the Mammalian Gene Collection (MGC).</title>
        <authorList>
            <consortium name="The MGC Project Team"/>
        </authorList>
    </citation>
    <scope>NUCLEOTIDE SEQUENCE [LARGE SCALE MRNA] (ISOFORM P67)</scope>
    <source>
        <tissue>Kidney</tissue>
    </source>
</reference>
<reference key="5">
    <citation type="journal article" date="1998" name="Oncogene">
        <title>Disabled-2 (Dab2) is an SH3 domain-binding partner of Grb2.</title>
        <authorList>
            <person name="Xu X.X."/>
            <person name="Yi T."/>
            <person name="Tang B."/>
            <person name="Lambeth J.D."/>
        </authorList>
    </citation>
    <scope>INTERACTION WITH GRB2</scope>
</reference>
<reference key="6">
    <citation type="journal article" date="2000" name="Biochem. J.">
        <title>p67 isoform of mouse disabled 2 protein acts as a transcriptional activator during the differentiation of F9 cells.</title>
        <authorList>
            <person name="Cho S.-Y."/>
            <person name="Jeon J.W."/>
            <person name="Lee S.H."/>
            <person name="Park S.-S."/>
        </authorList>
    </citation>
    <scope>FUNCTION (ISOFORM P67)</scope>
    <scope>SUBCELLULAR LOCATION (ISOFORM P67)</scope>
    <scope>INTERACTION WITH PIAS2</scope>
</reference>
<reference key="7">
    <citation type="journal article" date="2001" name="Traffic">
        <title>Disabled-2 colocalizes with the LDLR in clathrin-coated pits and interacts with AP-2.</title>
        <authorList>
            <person name="Morris S.M."/>
            <person name="Cooper J.A."/>
        </authorList>
    </citation>
    <scope>FUNCTION</scope>
    <scope>SUBCELLULAR LOCATION</scope>
    <scope>INTERACTION WITH LDLR; APP; APLP; APLP2; INPP5D; LRP1 AND AP2A2</scope>
    <scope>DOMAIN</scope>
</reference>
<reference key="8">
    <citation type="journal article" date="2002" name="Biochem. Biophys. Res. Commun.">
        <title>DOC-2/DAB2 is the binding partner of myosin VI.</title>
        <authorList>
            <person name="Inoue A."/>
            <person name="Sato O."/>
            <person name="Homma K."/>
            <person name="Ikebe M."/>
        </authorList>
    </citation>
    <scope>INTERACTION WITH MYO6</scope>
</reference>
<reference key="9">
    <citation type="journal article" date="2002" name="Dev. Biol.">
        <title>Disabled-2 is essential for endodermal cell positioning and structure formation during mouse embryogenesis.</title>
        <authorList>
            <person name="Yang D.H."/>
            <person name="Smith E.R."/>
            <person name="Roland I.H."/>
            <person name="Sheng Z."/>
            <person name="He J."/>
            <person name="Martin W.D."/>
            <person name="Hamilton T.C."/>
            <person name="Lambeth J.D."/>
            <person name="Xu X.X."/>
        </authorList>
    </citation>
    <scope>FUNCTION</scope>
    <scope>DEVELOPMENTAL STAGE</scope>
    <scope>DISRUPTION PHENOTYPE</scope>
</reference>
<reference key="10">
    <citation type="journal article" date="2002" name="EMBO J.">
        <title>Disabled-2 is transcriptionally regulated by ICSBP and augments macrophage spreading and adhesion.</title>
        <authorList>
            <person name="Rosenbauer F."/>
            <person name="Kallies A."/>
            <person name="Scheller M."/>
            <person name="Knobeloch K.P."/>
            <person name="Rock C.O."/>
            <person name="Schwieger M."/>
            <person name="Stocking C."/>
            <person name="Horak I."/>
        </authorList>
    </citation>
    <scope>FUNCTION</scope>
</reference>
<reference key="11">
    <citation type="journal article" date="2002" name="EMBO J.">
        <title>Dual roles for the Dab2 adaptor protein in embryonic development and kidney transport.</title>
        <authorList>
            <person name="Morris S.M."/>
            <person name="Tallquist M.D."/>
            <person name="Rock C.O."/>
            <person name="Cooper J.A."/>
        </authorList>
    </citation>
    <scope>FUNCTION</scope>
    <scope>DEVELOPMENTAL STAGE</scope>
    <scope>DISRUPTION PHENOTYPE</scope>
</reference>
<reference key="12">
    <citation type="journal article" date="2002" name="EMBO J.">
        <title>Disabled-2 exhibits the properties of a cargo-selective endocytic clathrin adaptor.</title>
        <authorList>
            <person name="Mishra S.K."/>
            <person name="Keyel P.A."/>
            <person name="Hawryluk M.J."/>
            <person name="Agostinelli N.R."/>
            <person name="Watkins S.C."/>
            <person name="Traub L.M."/>
        </authorList>
    </citation>
    <scope>FUNCTION</scope>
    <scope>SUBCELLULAR LOCATION</scope>
    <scope>INTERACTION WITH CLATHRIN AND PHOSPHATIDYLINOSITIDES</scope>
    <scope>DOMAIN</scope>
</reference>
<reference key="13">
    <citation type="journal article" date="2003" name="Brain Res. Mol. Brain Res.">
        <title>Interaction of Disabled-1 and the GTPase activating protein Dab2IP in mouse brain.</title>
        <authorList>
            <person name="Homayouni R."/>
            <person name="Magdaleno S."/>
            <person name="Keshvara L."/>
            <person name="Rice D.S."/>
            <person name="Curran T."/>
        </authorList>
    </citation>
    <scope>INTERACTION WITH DAB2IP</scope>
</reference>
<reference key="14">
    <citation type="journal article" date="2003" name="FEBS Lett.">
        <title>Dab2 links CIN85 with clathrin-mediated receptor internalization.</title>
        <authorList>
            <person name="Kowanetz K."/>
            <person name="Terzic J."/>
            <person name="Dikic I."/>
        </authorList>
    </citation>
    <scope>INTERACTION WITH SH3KBP1</scope>
</reference>
<reference key="15">
    <citation type="journal article" date="2003" name="Proc. Natl. Acad. Sci. U.S.A.">
        <title>Integrin beta cytoplasmic domain interactions with phosphotyrosine-binding domains: a structural prototype for diversity in integrin signaling.</title>
        <authorList>
            <person name="Calderwood D.A."/>
            <person name="Fujioka Y."/>
            <person name="de Pereda J.M."/>
            <person name="Garcia-Alvarez B."/>
            <person name="Nakamoto T."/>
            <person name="Margolis B."/>
            <person name="McGlade C.J."/>
            <person name="Liddington R.C."/>
            <person name="Ginsberg M.H."/>
        </authorList>
    </citation>
    <scope>INTERACTION WITH ITGB3 AND ITGB5</scope>
</reference>
<reference key="16">
    <citation type="journal article" date="2005" name="Biochem. Biophys. Res. Commun.">
        <title>Cloning and characterization of mouse disabled 2-interacting protein 2, a mouse orthologue of human NOSTRIN.</title>
        <authorList>
            <person name="Choi Y.-J."/>
            <person name="Cho S.-Y."/>
            <person name="Kim H.-W."/>
            <person name="Kim J.-A."/>
            <person name="Bae S.-H."/>
            <person name="Park S.-S."/>
        </authorList>
    </citation>
    <scope>INTERACTION WITH NOSTRIN</scope>
</reference>
<reference key="17">
    <citation type="journal article" date="2005" name="J. Biol. Chem.">
        <title>Disabled-2 (Dab2) is required for transforming growth factor beta-induced epithelial to mesenchymal transition (EMT).</title>
        <authorList>
            <person name="Prunier C."/>
            <person name="Howe P.H."/>
        </authorList>
    </citation>
    <scope>FUNCTION</scope>
    <scope>INTERACTION WITH ITGB1</scope>
</reference>
<reference key="18">
    <citation type="journal article" date="2005" name="J. Biol. Chem.">
        <title>Disabled-2 (Dab2) mediates transforming growth factor beta (TGFbeta)-stimulated fibronectin synthesis through TGFbeta-activated kinase 1 and activation of the JNK pathway.</title>
        <authorList>
            <person name="Hocevar B.A."/>
            <person name="Prunier C."/>
            <person name="Howe P.H."/>
        </authorList>
    </citation>
    <scope>FUNCTION</scope>
    <scope>INTERACTION WITH MAP3K7</scope>
</reference>
<reference key="19">
    <citation type="journal article" date="2005" name="J. Cell Sci.">
        <title>Endocytosis of megalin by visceral endoderm cells requires the Dab2 adaptor protein.</title>
        <authorList>
            <person name="Maurer M.E."/>
            <person name="Cooper J.A."/>
        </authorList>
    </citation>
    <scope>FUNCTION</scope>
    <scope>TISSUE SPECIFICITY</scope>
</reference>
<reference key="20">
    <citation type="journal article" date="2005" name="Nat. Biotechnol.">
        <title>Immunoaffinity profiling of tyrosine phosphorylation in cancer cells.</title>
        <authorList>
            <person name="Rush J."/>
            <person name="Moritz A."/>
            <person name="Lee K.A."/>
            <person name="Guo A."/>
            <person name="Goss V.L."/>
            <person name="Spek E.J."/>
            <person name="Zhang H."/>
            <person name="Zha X.-M."/>
            <person name="Polakiewicz R.D."/>
            <person name="Comb M.J."/>
        </authorList>
    </citation>
    <scope>IDENTIFICATION BY MASS SPECTROMETRY [LARGE SCALE ANALYSIS]</scope>
</reference>
<reference key="21">
    <citation type="journal article" date="2006" name="J. Cell Sci.">
        <title>The adaptor protein Dab2 sorts LDL receptors into coated pits independently of AP-2 and ARH.</title>
        <authorList>
            <person name="Maurer M.E."/>
            <person name="Cooper J.A."/>
        </authorList>
    </citation>
    <scope>FUNCTION</scope>
    <scope>MUTAGENESIS OF LYS-53 AND SER-122</scope>
</reference>
<reference key="22">
    <citation type="journal article" date="2006" name="Mol. Biol. Cell">
        <title>A single common portal for clathrin-mediated endocytosis of distinct cargo governed by cargo-selective adaptors.</title>
        <authorList>
            <person name="Keyel P.A."/>
            <person name="Mishra S.K."/>
            <person name="Roth R."/>
            <person name="Heuser J.E."/>
            <person name="Watkins S.C."/>
            <person name="Traub L.M."/>
        </authorList>
    </citation>
    <scope>FUNCTION</scope>
    <scope>MUTAGENESIS OF SER-122</scope>
</reference>
<reference key="23">
    <citation type="journal article" date="2009" name="Immunity">
        <title>The phagosomal proteome in interferon-gamma-activated macrophages.</title>
        <authorList>
            <person name="Trost M."/>
            <person name="English L."/>
            <person name="Lemieux S."/>
            <person name="Courcelles M."/>
            <person name="Desjardins M."/>
            <person name="Thibault P."/>
        </authorList>
    </citation>
    <scope>PHOSPHORYLATION [LARGE SCALE ANALYSIS] AT SER-323 AND SER-727</scope>
    <scope>IDENTIFICATION BY MASS SPECTROMETRY [LARGE SCALE ANALYSIS]</scope>
</reference>
<reference key="24">
    <citation type="journal article" date="2009" name="Oncogene">
        <title>Dab2 stabilizes Axin and attenuates Wnt/beta-catenin signaling by preventing protein phosphatase 1 (PP1)-Axin interactions.</title>
        <authorList>
            <person name="Jiang Y."/>
            <person name="Luo W."/>
            <person name="Howe P.H."/>
        </authorList>
    </citation>
    <scope>FUNCTION</scope>
    <scope>INTERACTION WITH AXIN1 AND PPP1CA</scope>
</reference>
<reference key="25">
    <citation type="journal article" date="2010" name="Cell">
        <title>A tissue-specific atlas of mouse protein phosphorylation and expression.</title>
        <authorList>
            <person name="Huttlin E.L."/>
            <person name="Jedrychowski M.P."/>
            <person name="Elias J.E."/>
            <person name="Goswami T."/>
            <person name="Rad R."/>
            <person name="Beausoleil S.A."/>
            <person name="Villen J."/>
            <person name="Haas W."/>
            <person name="Sowa M.E."/>
            <person name="Gygi S.P."/>
        </authorList>
    </citation>
    <scope>PHOSPHORYLATION [LARGE SCALE ANALYSIS] AT TYR-170; SER-193; THR-671; SER-727 AND SER-759</scope>
    <scope>IDENTIFICATION BY MASS SPECTROMETRY [LARGE SCALE ANALYSIS]</scope>
    <source>
        <tissue>Brown adipose tissue</tissue>
        <tissue>Heart</tissue>
        <tissue>Kidney</tissue>
        <tissue>Liver</tissue>
        <tissue>Lung</tissue>
        <tissue>Spleen</tissue>
        <tissue>Testis</tissue>
    </source>
</reference>
<reference key="26">
    <citation type="journal article" date="2010" name="Mol. Biol. Cell">
        <title>Type II transforming growth factor-beta receptor recycling is dependent upon the clathrin adaptor protein Dab2.</title>
        <authorList>
            <person name="Penheiter S.G."/>
            <person name="Singh R.D."/>
            <person name="Repellin C.E."/>
            <person name="Wilkes M.C."/>
            <person name="Edens M."/>
            <person name="Howe P.H."/>
            <person name="Pagano R.E."/>
            <person name="Leof E.B."/>
        </authorList>
    </citation>
    <scope>FUNCTION</scope>
</reference>
<reference key="27">
    <citation type="journal article" date="2012" name="Mol. Biol. Cell">
        <title>FCH domain only-2 organizes clathrin-coated structures and interacts with Disabled-2 for low-density lipoprotein receptor endocytosis.</title>
        <authorList>
            <person name="Mulkearns E.E."/>
            <person name="Cooper J.A."/>
        </authorList>
    </citation>
    <scope>INTERACTION WITH FCHO2</scope>
    <scope>MUTAGENESIS OF PRO-294 AND PRO-299</scope>
</reference>
<reference key="28">
    <citation type="journal article" date="2012" name="Mol. Biol. Cell">
        <title>The clathrin adaptor Dab2 recruits EH domain scaffold proteins to regulate integrin beta1 endocytosis.</title>
        <authorList>
            <person name="Teckchandani A."/>
            <person name="Mulkearns E.E."/>
            <person name="Randolph T.W."/>
            <person name="Toida N."/>
            <person name="Cooper J.A."/>
        </authorList>
    </citation>
    <scope>INTERACTION WITH EPS15</scope>
    <scope>EPS15L1 AND ITSN1</scope>
    <scope>MUTAGENESIS OF PHE-255; PHE-398; PHE-589; PHE-736 AND PHE-765</scope>
</reference>
<reference key="29">
    <citation type="journal article" date="2003" name="J. Biol. Chem.">
        <title>Crystal structures of the Dab homology domains of mouse disabled 1 and 2.</title>
        <authorList>
            <person name="Yun M."/>
            <person name="Keshvara L."/>
            <person name="Park C.G."/>
            <person name="Zhang Y.M."/>
            <person name="Dickerson J.B."/>
            <person name="Zheng J."/>
            <person name="Rock C.O."/>
            <person name="Curran T."/>
            <person name="Park H.W."/>
        </authorList>
    </citation>
    <scope>X-RAY CRYSTALLOGRAPHY (2.45 ANGSTROMS) OF 33-191</scope>
    <scope>MUTAGENESIS OF LYS-53 AND LYS-90</scope>
</reference>
<proteinExistence type="evidence at protein level"/>